<proteinExistence type="evidence at protein level"/>
<name>SUS4_ARATH</name>
<keyword id="KW-0328">Glycosyltransferase</keyword>
<keyword id="KW-1185">Reference proteome</keyword>
<keyword id="KW-0346">Stress response</keyword>
<keyword id="KW-0808">Transferase</keyword>
<evidence type="ECO:0000250" key="1"/>
<evidence type="ECO:0000269" key="2">
    <source>
    </source>
</evidence>
<evidence type="ECO:0000269" key="3">
    <source>
    </source>
</evidence>
<evidence type="ECO:0000269" key="4">
    <source>
    </source>
</evidence>
<evidence type="ECO:0000269" key="5">
    <source>
    </source>
</evidence>
<evidence type="ECO:0000305" key="6"/>
<feature type="chain" id="PRO_0000418803" description="Sucrose synthase 4">
    <location>
        <begin position="1"/>
        <end position="808"/>
    </location>
</feature>
<feature type="region of interest" description="GT-B glycosyltransferase" evidence="1">
    <location>
        <begin position="277"/>
        <end position="754"/>
    </location>
</feature>
<feature type="sequence conflict" description="In Ref. 3; BAE99649." evidence="6" ref="3">
    <original>D</original>
    <variation>V</variation>
    <location>
        <position position="395"/>
    </location>
</feature>
<reference key="1">
    <citation type="journal article" date="2000" name="Nature">
        <title>Sequence and analysis of chromosome 3 of the plant Arabidopsis thaliana.</title>
        <authorList>
            <person name="Salanoubat M."/>
            <person name="Lemcke K."/>
            <person name="Rieger M."/>
            <person name="Ansorge W."/>
            <person name="Unseld M."/>
            <person name="Fartmann B."/>
            <person name="Valle G."/>
            <person name="Bloecker H."/>
            <person name="Perez-Alonso M."/>
            <person name="Obermaier B."/>
            <person name="Delseny M."/>
            <person name="Boutry M."/>
            <person name="Grivell L.A."/>
            <person name="Mache R."/>
            <person name="Puigdomenech P."/>
            <person name="De Simone V."/>
            <person name="Choisne N."/>
            <person name="Artiguenave F."/>
            <person name="Robert C."/>
            <person name="Brottier P."/>
            <person name="Wincker P."/>
            <person name="Cattolico L."/>
            <person name="Weissenbach J."/>
            <person name="Saurin W."/>
            <person name="Quetier F."/>
            <person name="Schaefer M."/>
            <person name="Mueller-Auer S."/>
            <person name="Gabel C."/>
            <person name="Fuchs M."/>
            <person name="Benes V."/>
            <person name="Wurmbach E."/>
            <person name="Drzonek H."/>
            <person name="Erfle H."/>
            <person name="Jordan N."/>
            <person name="Bangert S."/>
            <person name="Wiedelmann R."/>
            <person name="Kranz H."/>
            <person name="Voss H."/>
            <person name="Holland R."/>
            <person name="Brandt P."/>
            <person name="Nyakatura G."/>
            <person name="Vezzi A."/>
            <person name="D'Angelo M."/>
            <person name="Pallavicini A."/>
            <person name="Toppo S."/>
            <person name="Simionati B."/>
            <person name="Conrad A."/>
            <person name="Hornischer K."/>
            <person name="Kauer G."/>
            <person name="Loehnert T.-H."/>
            <person name="Nordsiek G."/>
            <person name="Reichelt J."/>
            <person name="Scharfe M."/>
            <person name="Schoen O."/>
            <person name="Bargues M."/>
            <person name="Terol J."/>
            <person name="Climent J."/>
            <person name="Navarro P."/>
            <person name="Collado C."/>
            <person name="Perez-Perez A."/>
            <person name="Ottenwaelder B."/>
            <person name="Duchemin D."/>
            <person name="Cooke R."/>
            <person name="Laudie M."/>
            <person name="Berger-Llauro C."/>
            <person name="Purnelle B."/>
            <person name="Masuy D."/>
            <person name="de Haan M."/>
            <person name="Maarse A.C."/>
            <person name="Alcaraz J.-P."/>
            <person name="Cottet A."/>
            <person name="Casacuberta E."/>
            <person name="Monfort A."/>
            <person name="Argiriou A."/>
            <person name="Flores M."/>
            <person name="Liguori R."/>
            <person name="Vitale D."/>
            <person name="Mannhaupt G."/>
            <person name="Haase D."/>
            <person name="Schoof H."/>
            <person name="Rudd S."/>
            <person name="Zaccaria P."/>
            <person name="Mewes H.-W."/>
            <person name="Mayer K.F.X."/>
            <person name="Kaul S."/>
            <person name="Town C.D."/>
            <person name="Koo H.L."/>
            <person name="Tallon L.J."/>
            <person name="Jenkins J."/>
            <person name="Rooney T."/>
            <person name="Rizzo M."/>
            <person name="Walts A."/>
            <person name="Utterback T."/>
            <person name="Fujii C.Y."/>
            <person name="Shea T.P."/>
            <person name="Creasy T.H."/>
            <person name="Haas B."/>
            <person name="Maiti R."/>
            <person name="Wu D."/>
            <person name="Peterson J."/>
            <person name="Van Aken S."/>
            <person name="Pai G."/>
            <person name="Militscher J."/>
            <person name="Sellers P."/>
            <person name="Gill J.E."/>
            <person name="Feldblyum T.V."/>
            <person name="Preuss D."/>
            <person name="Lin X."/>
            <person name="Nierman W.C."/>
            <person name="Salzberg S.L."/>
            <person name="White O."/>
            <person name="Venter J.C."/>
            <person name="Fraser C.M."/>
            <person name="Kaneko T."/>
            <person name="Nakamura Y."/>
            <person name="Sato S."/>
            <person name="Kato T."/>
            <person name="Asamizu E."/>
            <person name="Sasamoto S."/>
            <person name="Kimura T."/>
            <person name="Idesawa K."/>
            <person name="Kawashima K."/>
            <person name="Kishida Y."/>
            <person name="Kiyokawa C."/>
            <person name="Kohara M."/>
            <person name="Matsumoto M."/>
            <person name="Matsuno A."/>
            <person name="Muraki A."/>
            <person name="Nakayama S."/>
            <person name="Nakazaki N."/>
            <person name="Shinpo S."/>
            <person name="Takeuchi C."/>
            <person name="Wada T."/>
            <person name="Watanabe A."/>
            <person name="Yamada M."/>
            <person name="Yasuda M."/>
            <person name="Tabata S."/>
        </authorList>
    </citation>
    <scope>NUCLEOTIDE SEQUENCE [LARGE SCALE GENOMIC DNA]</scope>
    <source>
        <strain>cv. Columbia</strain>
    </source>
</reference>
<reference key="2">
    <citation type="journal article" date="2017" name="Plant J.">
        <title>Araport11: a complete reannotation of the Arabidopsis thaliana reference genome.</title>
        <authorList>
            <person name="Cheng C.Y."/>
            <person name="Krishnakumar V."/>
            <person name="Chan A.P."/>
            <person name="Thibaud-Nissen F."/>
            <person name="Schobel S."/>
            <person name="Town C.D."/>
        </authorList>
    </citation>
    <scope>GENOME REANNOTATION</scope>
    <source>
        <strain>cv. Columbia</strain>
    </source>
</reference>
<reference key="3">
    <citation type="submission" date="2006-07" db="EMBL/GenBank/DDBJ databases">
        <title>Large-scale analysis of RIKEN Arabidopsis full-length (RAFL) cDNAs.</title>
        <authorList>
            <person name="Totoki Y."/>
            <person name="Seki M."/>
            <person name="Ishida J."/>
            <person name="Nakajima M."/>
            <person name="Enju A."/>
            <person name="Kamiya A."/>
            <person name="Narusaka M."/>
            <person name="Shin-i T."/>
            <person name="Nakagawa M."/>
            <person name="Sakamoto N."/>
            <person name="Oishi K."/>
            <person name="Kohara Y."/>
            <person name="Kobayashi M."/>
            <person name="Toyoda A."/>
            <person name="Sakaki Y."/>
            <person name="Sakurai T."/>
            <person name="Iida K."/>
            <person name="Akiyama K."/>
            <person name="Satou M."/>
            <person name="Toyoda T."/>
            <person name="Konagaya A."/>
            <person name="Carninci P."/>
            <person name="Kawai J."/>
            <person name="Hayashizaki Y."/>
            <person name="Shinozaki K."/>
        </authorList>
    </citation>
    <scope>NUCLEOTIDE SEQUENCE [LARGE SCALE MRNA] OF 1-395</scope>
    <source>
        <strain>cv. Columbia</strain>
    </source>
</reference>
<reference key="4">
    <citation type="journal article" date="2003" name="Science">
        <title>Empirical analysis of transcriptional activity in the Arabidopsis genome.</title>
        <authorList>
            <person name="Yamada K."/>
            <person name="Lim J."/>
            <person name="Dale J.M."/>
            <person name="Chen H."/>
            <person name="Shinn P."/>
            <person name="Palm C.J."/>
            <person name="Southwick A.M."/>
            <person name="Wu H.C."/>
            <person name="Kim C.J."/>
            <person name="Nguyen M."/>
            <person name="Pham P.K."/>
            <person name="Cheuk R.F."/>
            <person name="Karlin-Newmann G."/>
            <person name="Liu S.X."/>
            <person name="Lam B."/>
            <person name="Sakano H."/>
            <person name="Wu T."/>
            <person name="Yu G."/>
            <person name="Miranda M."/>
            <person name="Quach H.L."/>
            <person name="Tripp M."/>
            <person name="Chang C.H."/>
            <person name="Lee J.M."/>
            <person name="Toriumi M.J."/>
            <person name="Chan M.M."/>
            <person name="Tang C.C."/>
            <person name="Onodera C.S."/>
            <person name="Deng J.M."/>
            <person name="Akiyama K."/>
            <person name="Ansari Y."/>
            <person name="Arakawa T."/>
            <person name="Banh J."/>
            <person name="Banno F."/>
            <person name="Bowser L."/>
            <person name="Brooks S.Y."/>
            <person name="Carninci P."/>
            <person name="Chao Q."/>
            <person name="Choy N."/>
            <person name="Enju A."/>
            <person name="Goldsmith A.D."/>
            <person name="Gurjal M."/>
            <person name="Hansen N.F."/>
            <person name="Hayashizaki Y."/>
            <person name="Johnson-Hopson C."/>
            <person name="Hsuan V.W."/>
            <person name="Iida K."/>
            <person name="Karnes M."/>
            <person name="Khan S."/>
            <person name="Koesema E."/>
            <person name="Ishida J."/>
            <person name="Jiang P.X."/>
            <person name="Jones T."/>
            <person name="Kawai J."/>
            <person name="Kamiya A."/>
            <person name="Meyers C."/>
            <person name="Nakajima M."/>
            <person name="Narusaka M."/>
            <person name="Seki M."/>
            <person name="Sakurai T."/>
            <person name="Satou M."/>
            <person name="Tamse R."/>
            <person name="Vaysberg M."/>
            <person name="Wallender E.K."/>
            <person name="Wong C."/>
            <person name="Yamamura Y."/>
            <person name="Yuan S."/>
            <person name="Shinozaki K."/>
            <person name="Davis R.W."/>
            <person name="Theologis A."/>
            <person name="Ecker J.R."/>
        </authorList>
    </citation>
    <scope>NUCLEOTIDE SEQUENCE [LARGE SCALE MRNA] OF 262-808</scope>
    <source>
        <strain>cv. Columbia</strain>
    </source>
</reference>
<reference key="5">
    <citation type="journal article" date="2004" name="J. Exp. Bot.">
        <title>Structure and expression profile of the sucrose synthase multigene family in Arabidopsis.</title>
        <authorList>
            <person name="Baud S."/>
            <person name="Vaultier M.N."/>
            <person name="Rochat C."/>
        </authorList>
    </citation>
    <scope>GENE FAMILY</scope>
    <scope>TISSUE SPECIFICITY</scope>
    <scope>INDUCTION</scope>
</reference>
<reference key="6">
    <citation type="journal article" date="2007" name="Plant J.">
        <title>Analysis of the sucrose synthase gene family in Arabidopsis.</title>
        <authorList>
            <person name="Bieniawska Z."/>
            <person name="Paul Barratt D.H."/>
            <person name="Garlick A.P."/>
            <person name="Thole V."/>
            <person name="Kruger N.J."/>
            <person name="Martin C."/>
            <person name="Zrenner R."/>
            <person name="Smith A.M."/>
        </authorList>
    </citation>
    <scope>BIOPHYSICOCHEMICAL PROPERTIES</scope>
    <scope>TISSUE SPECIFICITY</scope>
    <scope>INDUCTION</scope>
    <scope>DISRUPTION PHENOTYPE</scope>
</reference>
<reference key="7">
    <citation type="journal article" date="2008" name="J. Exp. Bot.">
        <title>Localization of sucrose synthase in developing seed and siliques of Arabidopsis thaliana reveals diverse roles for SUS during development.</title>
        <authorList>
            <person name="Fallahi H."/>
            <person name="Scofield G.N."/>
            <person name="Badger M.R."/>
            <person name="Chow W.S."/>
            <person name="Furbank R.T."/>
            <person name="Ruan Y.L."/>
        </authorList>
    </citation>
    <scope>TISSUE SPECIFICITY</scope>
</reference>
<reference key="8">
    <citation type="journal article" date="2011" name="Plant J.">
        <title>Modulation of sugar metabolism by an INDETERMINATE DOMAIN transcription factor contributes to photoperiodic flowering in Arabidopsis.</title>
        <authorList>
            <person name="Seo P.J."/>
            <person name="Ryu J."/>
            <person name="Kang S.K."/>
            <person name="Park C.M."/>
        </authorList>
    </citation>
    <scope>INDUCTION BY NUC</scope>
</reference>
<organism>
    <name type="scientific">Arabidopsis thaliana</name>
    <name type="common">Mouse-ear cress</name>
    <dbReference type="NCBI Taxonomy" id="3702"/>
    <lineage>
        <taxon>Eukaryota</taxon>
        <taxon>Viridiplantae</taxon>
        <taxon>Streptophyta</taxon>
        <taxon>Embryophyta</taxon>
        <taxon>Tracheophyta</taxon>
        <taxon>Spermatophyta</taxon>
        <taxon>Magnoliopsida</taxon>
        <taxon>eudicotyledons</taxon>
        <taxon>Gunneridae</taxon>
        <taxon>Pentapetalae</taxon>
        <taxon>rosids</taxon>
        <taxon>malvids</taxon>
        <taxon>Brassicales</taxon>
        <taxon>Brassicaceae</taxon>
        <taxon>Camelineae</taxon>
        <taxon>Arabidopsis</taxon>
    </lineage>
</organism>
<comment type="function">
    <text evidence="1">Sucrose-cleaving enzyme that provides UDP-glucose and fructose for various metabolic pathways.</text>
</comment>
<comment type="catalytic activity">
    <reaction>
        <text>an NDP-alpha-D-glucose + D-fructose = a ribonucleoside 5'-diphosphate + sucrose + H(+)</text>
        <dbReference type="Rhea" id="RHEA:16241"/>
        <dbReference type="ChEBI" id="CHEBI:15378"/>
        <dbReference type="ChEBI" id="CHEBI:17992"/>
        <dbReference type="ChEBI" id="CHEBI:37721"/>
        <dbReference type="ChEBI" id="CHEBI:57930"/>
        <dbReference type="ChEBI" id="CHEBI:76533"/>
        <dbReference type="EC" id="2.4.1.13"/>
    </reaction>
</comment>
<comment type="biophysicochemical properties">
    <kinetics>
        <KM evidence="3">4.97 mM for D-fructose (synthetic reaction) at pH 9.4</KM>
        <KM evidence="3">0.07 mM for UDP-glucose (synthetic reaction) at pH 9.4</KM>
        <KM evidence="3">67.54 mM for sucrose (degradative reaction) at pH 6</KM>
        <KM evidence="3">0.07 mM for UDP (degradative reaction) at pH 6</KM>
        <Vmax evidence="3">12.01 umol/min/mg enzyme for synthetic reaction at pH 9.4</Vmax>
        <Vmax evidence="3">4.99 umol/min/mg enzyme for degradative reaction at pH 6</Vmax>
    </kinetics>
    <phDependence>
        <text evidence="3">Optimum pH is 6.0-7.0 for degradative reaction (PubMed:17257168, PubMed:22184213). Optimum pH is 7.0 for synthetic reaction (PubMed:22184213). Optimum pH is 9.0-9.5 for synthetic reaction (PubMed:17257168).</text>
    </phDependence>
</comment>
<comment type="tissue specificity">
    <text evidence="2 3 4">Detected in the whole plant with highest expression in young rosette leaves and roots.</text>
</comment>
<comment type="induction">
    <text evidence="2 3 5">By anaerobic stress. By hypoxia in the roots (at protein level). Up-regulated by NUC/IDD8.</text>
</comment>
<comment type="disruption phenotype">
    <text evidence="3">No visible phenotype.</text>
</comment>
<comment type="similarity">
    <text evidence="6">Belongs to the glycosyltransferase 1 family. Plant sucrose synthase subfamily.</text>
</comment>
<comment type="sequence caution" evidence="6">
    <conflict type="erroneous initiation">
        <sequence resource="EMBL-CDS" id="AAK59464"/>
    </conflict>
    <text>Truncated N-terminus.</text>
</comment>
<dbReference type="EC" id="2.4.1.13"/>
<dbReference type="EMBL" id="AL353871">
    <property type="protein sequence ID" value="CAB89040.1"/>
    <property type="molecule type" value="Genomic_DNA"/>
</dbReference>
<dbReference type="EMBL" id="CP002686">
    <property type="protein sequence ID" value="AEE77773.1"/>
    <property type="molecule type" value="Genomic_DNA"/>
</dbReference>
<dbReference type="EMBL" id="CP002686">
    <property type="protein sequence ID" value="ANM64625.1"/>
    <property type="molecule type" value="Genomic_DNA"/>
</dbReference>
<dbReference type="EMBL" id="AK227662">
    <property type="protein sequence ID" value="BAE99649.1"/>
    <property type="molecule type" value="mRNA"/>
</dbReference>
<dbReference type="EMBL" id="AY034958">
    <property type="protein sequence ID" value="AAK59464.1"/>
    <property type="status" value="ALT_INIT"/>
    <property type="molecule type" value="mRNA"/>
</dbReference>
<dbReference type="PIR" id="T49233">
    <property type="entry name" value="T49233"/>
</dbReference>
<dbReference type="RefSeq" id="NP_001326640.1">
    <property type="nucleotide sequence ID" value="NM_001339091.1"/>
</dbReference>
<dbReference type="RefSeq" id="NP_566865.2">
    <property type="nucleotide sequence ID" value="NM_114187.5"/>
</dbReference>
<dbReference type="SMR" id="Q9LXL5"/>
<dbReference type="BioGRID" id="8715">
    <property type="interactions" value="2"/>
</dbReference>
<dbReference type="FunCoup" id="Q9LXL5">
    <property type="interactions" value="172"/>
</dbReference>
<dbReference type="STRING" id="3702.Q9LXL5"/>
<dbReference type="CAZy" id="GT4">
    <property type="family name" value="Glycosyltransferase Family 4"/>
</dbReference>
<dbReference type="iPTMnet" id="Q9LXL5"/>
<dbReference type="MetOSite" id="Q9LXL5"/>
<dbReference type="SwissPalm" id="Q9LXL5"/>
<dbReference type="PaxDb" id="3702-AT3G43190.1"/>
<dbReference type="ProteomicsDB" id="234102"/>
<dbReference type="EnsemblPlants" id="AT3G43190.1">
    <property type="protein sequence ID" value="AT3G43190.1"/>
    <property type="gene ID" value="AT3G43190"/>
</dbReference>
<dbReference type="EnsemblPlants" id="AT3G43190.2">
    <property type="protein sequence ID" value="AT3G43190.2"/>
    <property type="gene ID" value="AT3G43190"/>
</dbReference>
<dbReference type="GeneID" id="823393"/>
<dbReference type="Gramene" id="AT3G43190.1">
    <property type="protein sequence ID" value="AT3G43190.1"/>
    <property type="gene ID" value="AT3G43190"/>
</dbReference>
<dbReference type="Gramene" id="AT3G43190.2">
    <property type="protein sequence ID" value="AT3G43190.2"/>
    <property type="gene ID" value="AT3G43190"/>
</dbReference>
<dbReference type="KEGG" id="ath:AT3G43190"/>
<dbReference type="Araport" id="AT3G43190"/>
<dbReference type="TAIR" id="AT3G43190">
    <property type="gene designation" value="SUS4"/>
</dbReference>
<dbReference type="eggNOG" id="KOG0853">
    <property type="taxonomic scope" value="Eukaryota"/>
</dbReference>
<dbReference type="HOGENOM" id="CLU_019158_1_0_1"/>
<dbReference type="InParanoid" id="Q9LXL5"/>
<dbReference type="OMA" id="VDPSHWE"/>
<dbReference type="PhylomeDB" id="Q9LXL5"/>
<dbReference type="BioCyc" id="MetaCyc:AT3G43190-MONOMER"/>
<dbReference type="BRENDA" id="2.4.1.13">
    <property type="organism ID" value="399"/>
</dbReference>
<dbReference type="PRO" id="PR:Q9LXL5"/>
<dbReference type="Proteomes" id="UP000006548">
    <property type="component" value="Chromosome 3"/>
</dbReference>
<dbReference type="ExpressionAtlas" id="Q9LXL5">
    <property type="expression patterns" value="baseline and differential"/>
</dbReference>
<dbReference type="GO" id="GO:0005773">
    <property type="term" value="C:vacuole"/>
    <property type="evidence" value="ECO:0007005"/>
    <property type="project" value="TAIR"/>
</dbReference>
<dbReference type="GO" id="GO:0016157">
    <property type="term" value="F:sucrose synthase activity"/>
    <property type="evidence" value="ECO:0000314"/>
    <property type="project" value="TAIR"/>
</dbReference>
<dbReference type="GO" id="GO:0071456">
    <property type="term" value="P:cellular response to hypoxia"/>
    <property type="evidence" value="ECO:0007007"/>
    <property type="project" value="TAIR"/>
</dbReference>
<dbReference type="GO" id="GO:0001666">
    <property type="term" value="P:response to hypoxia"/>
    <property type="evidence" value="ECO:0000270"/>
    <property type="project" value="UniProtKB"/>
</dbReference>
<dbReference type="GO" id="GO:0005985">
    <property type="term" value="P:sucrose metabolic process"/>
    <property type="evidence" value="ECO:0007669"/>
    <property type="project" value="InterPro"/>
</dbReference>
<dbReference type="FunFam" id="1.20.120.1230:FF:000001">
    <property type="entry name" value="Sucrose synthase"/>
    <property type="match status" value="1"/>
</dbReference>
<dbReference type="FunFam" id="3.10.450.330:FF:000001">
    <property type="entry name" value="Sucrose synthase"/>
    <property type="match status" value="1"/>
</dbReference>
<dbReference type="FunFam" id="3.40.50.2000:FF:000004">
    <property type="entry name" value="Sucrose synthase"/>
    <property type="match status" value="1"/>
</dbReference>
<dbReference type="Gene3D" id="1.20.120.1230">
    <property type="match status" value="1"/>
</dbReference>
<dbReference type="Gene3D" id="3.10.450.330">
    <property type="match status" value="1"/>
</dbReference>
<dbReference type="Gene3D" id="3.40.50.2000">
    <property type="entry name" value="Glycogen Phosphorylase B"/>
    <property type="match status" value="2"/>
</dbReference>
<dbReference type="InterPro" id="IPR001296">
    <property type="entry name" value="Glyco_trans_1"/>
</dbReference>
<dbReference type="InterPro" id="IPR000368">
    <property type="entry name" value="Sucrose_synth_GT-B1"/>
</dbReference>
<dbReference type="InterPro" id="IPR012820">
    <property type="entry name" value="Sucrose_synthase_pln/cyn"/>
</dbReference>
<dbReference type="InterPro" id="IPR056736">
    <property type="entry name" value="SUS_EPBD"/>
</dbReference>
<dbReference type="InterPro" id="IPR056735">
    <property type="entry name" value="SUS_N"/>
</dbReference>
<dbReference type="NCBIfam" id="TIGR02470">
    <property type="entry name" value="sucr_synth"/>
    <property type="match status" value="1"/>
</dbReference>
<dbReference type="PANTHER" id="PTHR45839">
    <property type="match status" value="1"/>
</dbReference>
<dbReference type="PANTHER" id="PTHR45839:SF27">
    <property type="entry name" value="SUCROSE SYNTHASE 4"/>
    <property type="match status" value="1"/>
</dbReference>
<dbReference type="Pfam" id="PF00534">
    <property type="entry name" value="Glycos_transf_1"/>
    <property type="match status" value="1"/>
</dbReference>
<dbReference type="Pfam" id="PF00862">
    <property type="entry name" value="GT-B_Sucrose_synth"/>
    <property type="match status" value="1"/>
</dbReference>
<dbReference type="Pfam" id="PF24862">
    <property type="entry name" value="SUS_EPBD"/>
    <property type="match status" value="1"/>
</dbReference>
<dbReference type="Pfam" id="PF24861">
    <property type="entry name" value="SUS_N"/>
    <property type="match status" value="1"/>
</dbReference>
<dbReference type="SUPFAM" id="SSF53756">
    <property type="entry name" value="UDP-Glycosyltransferase/glycogen phosphorylase"/>
    <property type="match status" value="1"/>
</dbReference>
<sequence length="808" mass="93003">MANAERVITRVHSQRERLDATLVAQKNEVFALLSRVEAKGKGILQHHQIIAEFEAMPLETQKKLKGGAFFEFLRSAQEAIVLPPFVALAVRPRPGVWEYVRVNLHDLVVEELQASEYLQFKEELVDGIKNGNFTLELDFEPFNAAFPRPTLNKYIGDGVEFLNRHLSAKLFHDKESLHPLLKFLRLHSHEGKTLMLNNRIQNLNTLQHNLRKAEEYLMELKPETLYSEFEHKFQEIGLERGWGDTAERVLNMIRLLLDLLEAPDPCTLENFLGRIPMVFNVVILSPHGYFAQDNVLGYPDTGGQVVYILDQVRALETEMLQRIKQQGLNITPRILIITRLLPDAAGTTCGQRLEKVYGSQYCDILRVPFRTEKGIVRKWISRFEVWPYLETFTEDVAAEISKELQGKPDLIIGNYSDGNLVASLLAHKLGVTQCTIAHALEKTKYPDSDIYWKKLDEKYHFSCQFTADLIAMNHTDFIITSTFQEIAGSKDTVGQYESHRSFTLPGLYRVVHGIDVFDPKFNIVSPGADMSIYFAYTEEKRRLTAFHLEIEELLYSDVENEEHLCVLKDKKKPIIFTMARLDRVKNLSGLVEWYGKNTRLRELVNLVVVGGDRRKESQDNEEKAEMKKMYELIEEYKLNGQFRWISSQMNRVRNGELYRYICDTKGAFVQPALYEAFGLTVVEAMTCGLPTFATCNGGPAEIIVHGKSGFHIDPYHGDKAAESLADFFTKCKHDPSHWDQISLGGLERIQEKYTWQIYSQRLLTLTGVYGFWKHVSNLDRLESRRYLEMFYALKYRPLAQAVPLAHEE</sequence>
<protein>
    <recommendedName>
        <fullName>Sucrose synthase 4</fullName>
        <shortName>AtSUS4</shortName>
        <ecNumber>2.4.1.13</ecNumber>
    </recommendedName>
    <alternativeName>
        <fullName>Sucrose-UDP glucosyltransferase 4</fullName>
    </alternativeName>
</protein>
<gene>
    <name type="primary">SUS4</name>
    <name type="ordered locus">At3g43190</name>
    <name type="ORF">F7K15_40</name>
</gene>
<accession>Q9LXL5</accession>
<accession>Q0WT99</accession>
<accession>Q94CC8</accession>